<keyword id="KW-0963">Cytoplasm</keyword>
<keyword id="KW-0342">GTP-binding</keyword>
<keyword id="KW-0378">Hydrolase</keyword>
<keyword id="KW-0479">Metal-binding</keyword>
<keyword id="KW-0547">Nucleotide-binding</keyword>
<keyword id="KW-1185">Reference proteome</keyword>
<keyword id="KW-0690">Ribosome biogenesis</keyword>
<keyword id="KW-0694">RNA-binding</keyword>
<keyword id="KW-0699">rRNA-binding</keyword>
<keyword id="KW-0862">Zinc</keyword>
<organism>
    <name type="scientific">Pseudomonas putida (strain ATCC 47054 / DSM 6125 / CFBP 8728 / NCIMB 11950 / KT2440)</name>
    <dbReference type="NCBI Taxonomy" id="160488"/>
    <lineage>
        <taxon>Bacteria</taxon>
        <taxon>Pseudomonadati</taxon>
        <taxon>Pseudomonadota</taxon>
        <taxon>Gammaproteobacteria</taxon>
        <taxon>Pseudomonadales</taxon>
        <taxon>Pseudomonadaceae</taxon>
        <taxon>Pseudomonas</taxon>
    </lineage>
</organism>
<evidence type="ECO:0000255" key="1">
    <source>
        <dbReference type="HAMAP-Rule" id="MF_01820"/>
    </source>
</evidence>
<evidence type="ECO:0000255" key="2">
    <source>
        <dbReference type="PROSITE-ProRule" id="PRU01058"/>
    </source>
</evidence>
<dbReference type="EC" id="3.6.1.-" evidence="1"/>
<dbReference type="EMBL" id="AE015451">
    <property type="protein sequence ID" value="AAN70470.1"/>
    <property type="molecule type" value="Genomic_DNA"/>
</dbReference>
<dbReference type="RefSeq" id="NP_747006.1">
    <property type="nucleotide sequence ID" value="NC_002947.4"/>
</dbReference>
<dbReference type="RefSeq" id="WP_003249512.1">
    <property type="nucleotide sequence ID" value="NZ_CP169744.1"/>
</dbReference>
<dbReference type="SMR" id="Q88DC4"/>
<dbReference type="STRING" id="160488.PP_4903"/>
<dbReference type="PaxDb" id="160488-PP_4903"/>
<dbReference type="GeneID" id="83682635"/>
<dbReference type="KEGG" id="ppu:PP_4903"/>
<dbReference type="PATRIC" id="fig|160488.4.peg.5238"/>
<dbReference type="eggNOG" id="COG1162">
    <property type="taxonomic scope" value="Bacteria"/>
</dbReference>
<dbReference type="HOGENOM" id="CLU_033617_2_0_6"/>
<dbReference type="OrthoDB" id="9809485at2"/>
<dbReference type="PhylomeDB" id="Q88DC4"/>
<dbReference type="BioCyc" id="PPUT160488:G1G01-5245-MONOMER"/>
<dbReference type="Proteomes" id="UP000000556">
    <property type="component" value="Chromosome"/>
</dbReference>
<dbReference type="GO" id="GO:0005737">
    <property type="term" value="C:cytoplasm"/>
    <property type="evidence" value="ECO:0007669"/>
    <property type="project" value="UniProtKB-SubCell"/>
</dbReference>
<dbReference type="GO" id="GO:0005525">
    <property type="term" value="F:GTP binding"/>
    <property type="evidence" value="ECO:0007669"/>
    <property type="project" value="UniProtKB-UniRule"/>
</dbReference>
<dbReference type="GO" id="GO:0003924">
    <property type="term" value="F:GTPase activity"/>
    <property type="evidence" value="ECO:0007669"/>
    <property type="project" value="UniProtKB-UniRule"/>
</dbReference>
<dbReference type="GO" id="GO:0046872">
    <property type="term" value="F:metal ion binding"/>
    <property type="evidence" value="ECO:0007669"/>
    <property type="project" value="UniProtKB-KW"/>
</dbReference>
<dbReference type="GO" id="GO:0019843">
    <property type="term" value="F:rRNA binding"/>
    <property type="evidence" value="ECO:0007669"/>
    <property type="project" value="UniProtKB-KW"/>
</dbReference>
<dbReference type="GO" id="GO:0042274">
    <property type="term" value="P:ribosomal small subunit biogenesis"/>
    <property type="evidence" value="ECO:0007669"/>
    <property type="project" value="UniProtKB-UniRule"/>
</dbReference>
<dbReference type="CDD" id="cd01854">
    <property type="entry name" value="YjeQ_EngC"/>
    <property type="match status" value="1"/>
</dbReference>
<dbReference type="Gene3D" id="2.40.50.140">
    <property type="entry name" value="Nucleic acid-binding proteins"/>
    <property type="match status" value="1"/>
</dbReference>
<dbReference type="Gene3D" id="3.40.50.300">
    <property type="entry name" value="P-loop containing nucleotide triphosphate hydrolases"/>
    <property type="match status" value="1"/>
</dbReference>
<dbReference type="Gene3D" id="1.10.40.50">
    <property type="entry name" value="Probable gtpase engc, domain 3"/>
    <property type="match status" value="1"/>
</dbReference>
<dbReference type="HAMAP" id="MF_01820">
    <property type="entry name" value="GTPase_RsgA"/>
    <property type="match status" value="1"/>
</dbReference>
<dbReference type="InterPro" id="IPR030378">
    <property type="entry name" value="G_CP_dom"/>
</dbReference>
<dbReference type="InterPro" id="IPR012340">
    <property type="entry name" value="NA-bd_OB-fold"/>
</dbReference>
<dbReference type="InterPro" id="IPR027417">
    <property type="entry name" value="P-loop_NTPase"/>
</dbReference>
<dbReference type="InterPro" id="IPR004881">
    <property type="entry name" value="Ribosome_biogen_GTPase_RsgA"/>
</dbReference>
<dbReference type="InterPro" id="IPR010914">
    <property type="entry name" value="RsgA_GTPase_dom"/>
</dbReference>
<dbReference type="NCBIfam" id="NF008931">
    <property type="entry name" value="PRK12288.1"/>
    <property type="match status" value="1"/>
</dbReference>
<dbReference type="NCBIfam" id="TIGR00157">
    <property type="entry name" value="ribosome small subunit-dependent GTPase A"/>
    <property type="match status" value="1"/>
</dbReference>
<dbReference type="PANTHER" id="PTHR32120">
    <property type="entry name" value="SMALL RIBOSOMAL SUBUNIT BIOGENESIS GTPASE RSGA"/>
    <property type="match status" value="1"/>
</dbReference>
<dbReference type="PANTHER" id="PTHR32120:SF11">
    <property type="entry name" value="SMALL RIBOSOMAL SUBUNIT BIOGENESIS GTPASE RSGA 1, MITOCHONDRIAL-RELATED"/>
    <property type="match status" value="1"/>
</dbReference>
<dbReference type="Pfam" id="PF03193">
    <property type="entry name" value="RsgA_GTPase"/>
    <property type="match status" value="1"/>
</dbReference>
<dbReference type="SUPFAM" id="SSF52540">
    <property type="entry name" value="P-loop containing nucleoside triphosphate hydrolases"/>
    <property type="match status" value="1"/>
</dbReference>
<dbReference type="PROSITE" id="PS50936">
    <property type="entry name" value="ENGC_GTPASE"/>
    <property type="match status" value="1"/>
</dbReference>
<dbReference type="PROSITE" id="PS51721">
    <property type="entry name" value="G_CP"/>
    <property type="match status" value="1"/>
</dbReference>
<comment type="function">
    <text evidence="1">One of several proteins that assist in the late maturation steps of the functional core of the 30S ribosomal subunit. Helps release RbfA from mature subunits. May play a role in the assembly of ribosomal proteins into the subunit. Circularly permuted GTPase that catalyzes slow GTP hydrolysis, GTPase activity is stimulated by the 30S ribosomal subunit.</text>
</comment>
<comment type="cofactor">
    <cofactor evidence="1">
        <name>Zn(2+)</name>
        <dbReference type="ChEBI" id="CHEBI:29105"/>
    </cofactor>
    <text evidence="1">Binds 1 zinc ion per subunit.</text>
</comment>
<comment type="subunit">
    <text evidence="1">Monomer. Associates with 30S ribosomal subunit, binds 16S rRNA.</text>
</comment>
<comment type="subcellular location">
    <subcellularLocation>
        <location evidence="1">Cytoplasm</location>
    </subcellularLocation>
</comment>
<comment type="similarity">
    <text evidence="1">Belongs to the TRAFAC class YlqF/YawG GTPase family. RsgA subfamily.</text>
</comment>
<accession>Q88DC4</accession>
<proteinExistence type="inferred from homology"/>
<feature type="chain" id="PRO_0000171506" description="Small ribosomal subunit biogenesis GTPase RsgA">
    <location>
        <begin position="1"/>
        <end position="343"/>
    </location>
</feature>
<feature type="domain" description="CP-type G" evidence="2">
    <location>
        <begin position="116"/>
        <end position="275"/>
    </location>
</feature>
<feature type="binding site" evidence="1">
    <location>
        <begin position="163"/>
        <end position="166"/>
    </location>
    <ligand>
        <name>GTP</name>
        <dbReference type="ChEBI" id="CHEBI:37565"/>
    </ligand>
</feature>
<feature type="binding site" evidence="1">
    <location>
        <begin position="217"/>
        <end position="225"/>
    </location>
    <ligand>
        <name>GTP</name>
        <dbReference type="ChEBI" id="CHEBI:37565"/>
    </ligand>
</feature>
<feature type="binding site" evidence="1">
    <location>
        <position position="299"/>
    </location>
    <ligand>
        <name>Zn(2+)</name>
        <dbReference type="ChEBI" id="CHEBI:29105"/>
    </ligand>
</feature>
<feature type="binding site" evidence="1">
    <location>
        <position position="304"/>
    </location>
    <ligand>
        <name>Zn(2+)</name>
        <dbReference type="ChEBI" id="CHEBI:29105"/>
    </ligand>
</feature>
<feature type="binding site" evidence="1">
    <location>
        <position position="306"/>
    </location>
    <ligand>
        <name>Zn(2+)</name>
        <dbReference type="ChEBI" id="CHEBI:29105"/>
    </ligand>
</feature>
<feature type="binding site" evidence="1">
    <location>
        <position position="312"/>
    </location>
    <ligand>
        <name>Zn(2+)</name>
        <dbReference type="ChEBI" id="CHEBI:29105"/>
    </ligand>
</feature>
<gene>
    <name evidence="1" type="primary">rsgA</name>
    <name type="ordered locus">PP_4903</name>
</gene>
<reference key="1">
    <citation type="journal article" date="2002" name="Environ. Microbiol.">
        <title>Complete genome sequence and comparative analysis of the metabolically versatile Pseudomonas putida KT2440.</title>
        <authorList>
            <person name="Nelson K.E."/>
            <person name="Weinel C."/>
            <person name="Paulsen I.T."/>
            <person name="Dodson R.J."/>
            <person name="Hilbert H."/>
            <person name="Martins dos Santos V.A.P."/>
            <person name="Fouts D.E."/>
            <person name="Gill S.R."/>
            <person name="Pop M."/>
            <person name="Holmes M."/>
            <person name="Brinkac L.M."/>
            <person name="Beanan M.J."/>
            <person name="DeBoy R.T."/>
            <person name="Daugherty S.C."/>
            <person name="Kolonay J.F."/>
            <person name="Madupu R."/>
            <person name="Nelson W.C."/>
            <person name="White O."/>
            <person name="Peterson J.D."/>
            <person name="Khouri H.M."/>
            <person name="Hance I."/>
            <person name="Chris Lee P."/>
            <person name="Holtzapple E.K."/>
            <person name="Scanlan D."/>
            <person name="Tran K."/>
            <person name="Moazzez A."/>
            <person name="Utterback T.R."/>
            <person name="Rizzo M."/>
            <person name="Lee K."/>
            <person name="Kosack D."/>
            <person name="Moestl D."/>
            <person name="Wedler H."/>
            <person name="Lauber J."/>
            <person name="Stjepandic D."/>
            <person name="Hoheisel J."/>
            <person name="Straetz M."/>
            <person name="Heim S."/>
            <person name="Kiewitz C."/>
            <person name="Eisen J.A."/>
            <person name="Timmis K.N."/>
            <person name="Duesterhoeft A."/>
            <person name="Tuemmler B."/>
            <person name="Fraser C.M."/>
        </authorList>
    </citation>
    <scope>NUCLEOTIDE SEQUENCE [LARGE SCALE GENOMIC DNA]</scope>
    <source>
        <strain>ATCC 47054 / DSM 6125 / CFBP 8728 / NCIMB 11950 / KT2440</strain>
    </source>
</reference>
<protein>
    <recommendedName>
        <fullName evidence="1">Small ribosomal subunit biogenesis GTPase RsgA</fullName>
        <ecNumber evidence="1">3.6.1.-</ecNumber>
    </recommendedName>
</protein>
<name>RSGA_PSEPK</name>
<sequence>MAKRQLNRRQNWRIEKIQGERAARAAKREQHALQELEGGDLGPEQLGLVIAHFGVQVEVEAQDGETAGQVFRCHLRANLPALVTGDRVVWRAGNQGIGVIVAQMPRSTELCRPNNHGQLKPVAANVDLIVIVFAPAPEPHPNLIDRYLVAAEHAGLRPLLLLNKADLINDENGPGLHALLEVYRELGYPLLEVSAHHGDGMQRLQQQLDGHISVFVGQSGVGKSSLVNSLLPDAGTRVGDLSEWSGQGTHTTTTARLYHFPNGGDLIDSPGIREFGLGHVSRDDVEDGFIEFRDLFGTCRFRDCKHDREPGCALLKALEEGRIKPQRMNSYRSIIASLAEDSY</sequence>